<organism>
    <name type="scientific">Salmonella newport (strain SL254)</name>
    <dbReference type="NCBI Taxonomy" id="423368"/>
    <lineage>
        <taxon>Bacteria</taxon>
        <taxon>Pseudomonadati</taxon>
        <taxon>Pseudomonadota</taxon>
        <taxon>Gammaproteobacteria</taxon>
        <taxon>Enterobacterales</taxon>
        <taxon>Enterobacteriaceae</taxon>
        <taxon>Salmonella</taxon>
    </lineage>
</organism>
<sequence length="140" mass="15254">MLKTISPLISPTLLKVLAEMGHGDEIIFSDAHFPAHSLGPQVIRADGLSVSDLLRAIIPLFELDSYAPPLVMMAAVEGDTLDPSVEARYRDALSLEAPCPDIVRIDRYAFYERAQKAFAIVITGECAKYGNILLKKGVTP</sequence>
<proteinExistence type="inferred from homology"/>
<evidence type="ECO:0000255" key="1">
    <source>
        <dbReference type="HAMAP-Rule" id="MF_01662"/>
    </source>
</evidence>
<accession>B4T4X3</accession>
<name>FUCM_SALNS</name>
<feature type="chain" id="PRO_1000187196" description="L-fucose mutarotase">
    <location>
        <begin position="1"/>
        <end position="140"/>
    </location>
</feature>
<feature type="active site" description="Proton donor" evidence="1">
    <location>
        <position position="22"/>
    </location>
</feature>
<feature type="binding site" evidence="1">
    <location>
        <position position="30"/>
    </location>
    <ligand>
        <name>substrate</name>
    </ligand>
</feature>
<feature type="binding site" evidence="1">
    <location>
        <position position="107"/>
    </location>
    <ligand>
        <name>substrate</name>
    </ligand>
</feature>
<feature type="binding site" evidence="1">
    <location>
        <begin position="129"/>
        <end position="131"/>
    </location>
    <ligand>
        <name>substrate</name>
    </ligand>
</feature>
<comment type="function">
    <text evidence="1">Involved in the anomeric conversion of L-fucose.</text>
</comment>
<comment type="catalytic activity">
    <reaction evidence="1">
        <text>alpha-L-fucose = beta-L-fucose</text>
        <dbReference type="Rhea" id="RHEA:25580"/>
        <dbReference type="ChEBI" id="CHEBI:42548"/>
        <dbReference type="ChEBI" id="CHEBI:42589"/>
        <dbReference type="EC" id="5.1.3.29"/>
    </reaction>
</comment>
<comment type="pathway">
    <text evidence="1">Carbohydrate metabolism; L-fucose metabolism.</text>
</comment>
<comment type="subunit">
    <text evidence="1">Homodecamer.</text>
</comment>
<comment type="subcellular location">
    <subcellularLocation>
        <location evidence="1">Cytoplasm</location>
    </subcellularLocation>
</comment>
<comment type="similarity">
    <text evidence="1">Belongs to the RbsD / FucU family. FucU mutarotase subfamily.</text>
</comment>
<gene>
    <name evidence="1" type="primary">fucU</name>
    <name type="ordered locus">SNSL254_A3203</name>
</gene>
<dbReference type="EC" id="5.1.3.29" evidence="1"/>
<dbReference type="EMBL" id="CP001113">
    <property type="protein sequence ID" value="ACF62369.1"/>
    <property type="molecule type" value="Genomic_DNA"/>
</dbReference>
<dbReference type="RefSeq" id="WP_000920848.1">
    <property type="nucleotide sequence ID" value="NZ_CCMR01000001.1"/>
</dbReference>
<dbReference type="SMR" id="B4T4X3"/>
<dbReference type="KEGG" id="see:SNSL254_A3203"/>
<dbReference type="HOGENOM" id="CLU_120075_1_0_6"/>
<dbReference type="UniPathway" id="UPA00956"/>
<dbReference type="Proteomes" id="UP000008824">
    <property type="component" value="Chromosome"/>
</dbReference>
<dbReference type="GO" id="GO:0005737">
    <property type="term" value="C:cytoplasm"/>
    <property type="evidence" value="ECO:0007669"/>
    <property type="project" value="UniProtKB-SubCell"/>
</dbReference>
<dbReference type="GO" id="GO:0042806">
    <property type="term" value="F:fucose binding"/>
    <property type="evidence" value="ECO:0007669"/>
    <property type="project" value="InterPro"/>
</dbReference>
<dbReference type="GO" id="GO:0036373">
    <property type="term" value="F:L-fucose mutarotase activity"/>
    <property type="evidence" value="ECO:0007669"/>
    <property type="project" value="UniProtKB-EC"/>
</dbReference>
<dbReference type="GO" id="GO:0036065">
    <property type="term" value="P:fucosylation"/>
    <property type="evidence" value="ECO:0007669"/>
    <property type="project" value="TreeGrafter"/>
</dbReference>
<dbReference type="GO" id="GO:0042354">
    <property type="term" value="P:L-fucose metabolic process"/>
    <property type="evidence" value="ECO:0007669"/>
    <property type="project" value="UniProtKB-UniRule"/>
</dbReference>
<dbReference type="FunFam" id="3.40.1650.10:FF:000001">
    <property type="entry name" value="L-fucose mutarotase"/>
    <property type="match status" value="1"/>
</dbReference>
<dbReference type="Gene3D" id="3.40.1650.10">
    <property type="entry name" value="RbsD-like domain"/>
    <property type="match status" value="1"/>
</dbReference>
<dbReference type="HAMAP" id="MF_01662">
    <property type="entry name" value="L_fucose_rotase"/>
    <property type="match status" value="1"/>
</dbReference>
<dbReference type="InterPro" id="IPR023751">
    <property type="entry name" value="L-fucose_mutarotase"/>
</dbReference>
<dbReference type="InterPro" id="IPR023750">
    <property type="entry name" value="RbsD-like_sf"/>
</dbReference>
<dbReference type="InterPro" id="IPR050443">
    <property type="entry name" value="RbsD/FucU_mutarotase"/>
</dbReference>
<dbReference type="InterPro" id="IPR007721">
    <property type="entry name" value="RbsD_FucU"/>
</dbReference>
<dbReference type="NCBIfam" id="NF011949">
    <property type="entry name" value="PRK15420.1"/>
    <property type="match status" value="1"/>
</dbReference>
<dbReference type="PANTHER" id="PTHR31690">
    <property type="entry name" value="FUCOSE MUTAROTASE"/>
    <property type="match status" value="1"/>
</dbReference>
<dbReference type="PANTHER" id="PTHR31690:SF4">
    <property type="entry name" value="FUCOSE MUTAROTASE"/>
    <property type="match status" value="1"/>
</dbReference>
<dbReference type="Pfam" id="PF05025">
    <property type="entry name" value="RbsD_FucU"/>
    <property type="match status" value="1"/>
</dbReference>
<dbReference type="SUPFAM" id="SSF102546">
    <property type="entry name" value="RbsD-like"/>
    <property type="match status" value="1"/>
</dbReference>
<keyword id="KW-0119">Carbohydrate metabolism</keyword>
<keyword id="KW-0963">Cytoplasm</keyword>
<keyword id="KW-0294">Fucose metabolism</keyword>
<keyword id="KW-0413">Isomerase</keyword>
<reference key="1">
    <citation type="journal article" date="2011" name="J. Bacteriol.">
        <title>Comparative genomics of 28 Salmonella enterica isolates: evidence for CRISPR-mediated adaptive sublineage evolution.</title>
        <authorList>
            <person name="Fricke W.F."/>
            <person name="Mammel M.K."/>
            <person name="McDermott P.F."/>
            <person name="Tartera C."/>
            <person name="White D.G."/>
            <person name="Leclerc J.E."/>
            <person name="Ravel J."/>
            <person name="Cebula T.A."/>
        </authorList>
    </citation>
    <scope>NUCLEOTIDE SEQUENCE [LARGE SCALE GENOMIC DNA]</scope>
    <source>
        <strain>SL254</strain>
    </source>
</reference>
<protein>
    <recommendedName>
        <fullName evidence="1">L-fucose mutarotase</fullName>
        <ecNumber evidence="1">5.1.3.29</ecNumber>
    </recommendedName>
    <alternativeName>
        <fullName evidence="1">Fucose 1-epimerase</fullName>
    </alternativeName>
    <alternativeName>
        <fullName evidence="1">Type-2 mutarotase</fullName>
    </alternativeName>
</protein>